<organism>
    <name type="scientific">Streptococcus pneumoniae serotype 2 (strain D39 / NCTC 7466)</name>
    <dbReference type="NCBI Taxonomy" id="373153"/>
    <lineage>
        <taxon>Bacteria</taxon>
        <taxon>Bacillati</taxon>
        <taxon>Bacillota</taxon>
        <taxon>Bacilli</taxon>
        <taxon>Lactobacillales</taxon>
        <taxon>Streptococcaceae</taxon>
        <taxon>Streptococcus</taxon>
    </lineage>
</organism>
<dbReference type="EMBL" id="CP000410">
    <property type="protein sequence ID" value="ABJ54962.1"/>
    <property type="molecule type" value="Genomic_DNA"/>
</dbReference>
<dbReference type="RefSeq" id="WP_000418402.1">
    <property type="nucleotide sequence ID" value="NZ_JAMLJR010000009.1"/>
</dbReference>
<dbReference type="SMR" id="Q04LZ9"/>
<dbReference type="PaxDb" id="373153-SPD_0441"/>
<dbReference type="GeneID" id="45652070"/>
<dbReference type="KEGG" id="spd:SPD_0441"/>
<dbReference type="eggNOG" id="COG3343">
    <property type="taxonomic scope" value="Bacteria"/>
</dbReference>
<dbReference type="HOGENOM" id="CLU_116648_0_0_9"/>
<dbReference type="Proteomes" id="UP000001452">
    <property type="component" value="Chromosome"/>
</dbReference>
<dbReference type="GO" id="GO:0000428">
    <property type="term" value="C:DNA-directed RNA polymerase complex"/>
    <property type="evidence" value="ECO:0007669"/>
    <property type="project" value="UniProtKB-KW"/>
</dbReference>
<dbReference type="GO" id="GO:0003899">
    <property type="term" value="F:DNA-directed RNA polymerase activity"/>
    <property type="evidence" value="ECO:0007669"/>
    <property type="project" value="UniProtKB-UniRule"/>
</dbReference>
<dbReference type="GO" id="GO:0006351">
    <property type="term" value="P:DNA-templated transcription"/>
    <property type="evidence" value="ECO:0007669"/>
    <property type="project" value="InterPro"/>
</dbReference>
<dbReference type="GO" id="GO:0006355">
    <property type="term" value="P:regulation of DNA-templated transcription"/>
    <property type="evidence" value="ECO:0007669"/>
    <property type="project" value="UniProtKB-UniRule"/>
</dbReference>
<dbReference type="Gene3D" id="1.10.10.1250">
    <property type="entry name" value="RNA polymerase, subunit delta, N-terminal domain"/>
    <property type="match status" value="1"/>
</dbReference>
<dbReference type="HAMAP" id="MF_00357">
    <property type="entry name" value="RNApol_bact_RpoE"/>
    <property type="match status" value="1"/>
</dbReference>
<dbReference type="InterPro" id="IPR007759">
    <property type="entry name" value="Asxl_HARE-HTH"/>
</dbReference>
<dbReference type="InterPro" id="IPR038087">
    <property type="entry name" value="RNAP_delta_N_dom_sf"/>
</dbReference>
<dbReference type="InterPro" id="IPR029757">
    <property type="entry name" value="RpoE"/>
</dbReference>
<dbReference type="NCBIfam" id="TIGR04567">
    <property type="entry name" value="RNAP_delt_lowGC"/>
    <property type="match status" value="1"/>
</dbReference>
<dbReference type="Pfam" id="PF05066">
    <property type="entry name" value="HARE-HTH"/>
    <property type="match status" value="1"/>
</dbReference>
<dbReference type="PROSITE" id="PS51913">
    <property type="entry name" value="HTH_HARE"/>
    <property type="match status" value="1"/>
</dbReference>
<evidence type="ECO:0000255" key="1">
    <source>
        <dbReference type="HAMAP-Rule" id="MF_00357"/>
    </source>
</evidence>
<evidence type="ECO:0000255" key="2">
    <source>
        <dbReference type="PROSITE-ProRule" id="PRU01261"/>
    </source>
</evidence>
<evidence type="ECO:0000256" key="3">
    <source>
        <dbReference type="SAM" id="MobiDB-lite"/>
    </source>
</evidence>
<keyword id="KW-0240">DNA-directed RNA polymerase</keyword>
<keyword id="KW-0548">Nucleotidyltransferase</keyword>
<keyword id="KW-1185">Reference proteome</keyword>
<keyword id="KW-0804">Transcription</keyword>
<keyword id="KW-0808">Transferase</keyword>
<name>RPOE_STRP2</name>
<protein>
    <recommendedName>
        <fullName evidence="1">Probable DNA-directed RNA polymerase subunit delta</fullName>
    </recommendedName>
    <alternativeName>
        <fullName evidence="1">RNAP delta factor</fullName>
    </alternativeName>
</protein>
<feature type="chain" id="PRO_1000072074" description="Probable DNA-directed RNA polymerase subunit delta">
    <location>
        <begin position="1"/>
        <end position="195"/>
    </location>
</feature>
<feature type="domain" description="HTH HARE-type" evidence="2">
    <location>
        <begin position="14"/>
        <end position="83"/>
    </location>
</feature>
<feature type="region of interest" description="Disordered" evidence="3">
    <location>
        <begin position="120"/>
        <end position="195"/>
    </location>
</feature>
<feature type="compositionally biased region" description="Acidic residues" evidence="3">
    <location>
        <begin position="120"/>
        <end position="138"/>
    </location>
</feature>
<feature type="compositionally biased region" description="Acidic residues" evidence="3">
    <location>
        <begin position="145"/>
        <end position="195"/>
    </location>
</feature>
<reference key="1">
    <citation type="journal article" date="2007" name="J. Bacteriol.">
        <title>Genome sequence of Avery's virulent serotype 2 strain D39 of Streptococcus pneumoniae and comparison with that of unencapsulated laboratory strain R6.</title>
        <authorList>
            <person name="Lanie J.A."/>
            <person name="Ng W.-L."/>
            <person name="Kazmierczak K.M."/>
            <person name="Andrzejewski T.M."/>
            <person name="Davidsen T.M."/>
            <person name="Wayne K.J."/>
            <person name="Tettelin H."/>
            <person name="Glass J.I."/>
            <person name="Winkler M.E."/>
        </authorList>
    </citation>
    <scope>NUCLEOTIDE SEQUENCE [LARGE SCALE GENOMIC DNA]</scope>
    <source>
        <strain>D39 / NCTC 7466</strain>
    </source>
</reference>
<proteinExistence type="inferred from homology"/>
<comment type="function">
    <text evidence="1">Participates in both the initiation and recycling phases of transcription. In the presence of the delta subunit, RNAP displays an increased specificity of transcription, a decreased affinity for nucleic acids, and an increased efficiency of RNA synthesis because of enhanced recycling.</text>
</comment>
<comment type="subunit">
    <text evidence="1">RNAP is composed of a core of 2 alpha, a beta and a beta' subunits. The core is associated with a delta subunit and one of several sigma factors.</text>
</comment>
<comment type="similarity">
    <text evidence="1">Belongs to the RpoE family.</text>
</comment>
<accession>Q04LZ9</accession>
<sequence>MELEVFAGQEKSELSMIEVARAILELRGRDHEMHFSDLVNEIQNYLGTSNSDIREALPLFYTELNFDGSFISLGDNKWGLRSWYGVDEIDEEIIALEENDDDEVAPKAKKKRVNAFMDGDSDAIDYNADDPEDEDAYEADPALSYDDENPDDEKNEVEAYDAEINEIAPDDLGEDVDLNEDDDEFSDDDAETSEE</sequence>
<gene>
    <name evidence="1" type="primary">rpoE</name>
    <name type="ordered locus">SPD_0441</name>
</gene>